<gene>
    <name evidence="1" type="primary">rpmE2</name>
    <name type="ordered locus">SACE_0756</name>
</gene>
<protein>
    <recommendedName>
        <fullName evidence="1">Large ribosomal subunit protein bL31B</fullName>
    </recommendedName>
    <alternativeName>
        <fullName evidence="2">50S ribosomal protein L31 type B</fullName>
    </alternativeName>
</protein>
<name>RL31B_SACEN</name>
<keyword id="KW-1185">Reference proteome</keyword>
<keyword id="KW-0687">Ribonucleoprotein</keyword>
<keyword id="KW-0689">Ribosomal protein</keyword>
<sequence>MKPGIHPEYGPVVFRDRSTGTQFLTRSTATSEERVEWSDGNSYPLIVVDVTSASHPFWTGGRQVLDTQGRVEKFRRRYGDRARGGQ</sequence>
<evidence type="ECO:0000255" key="1">
    <source>
        <dbReference type="HAMAP-Rule" id="MF_00502"/>
    </source>
</evidence>
<evidence type="ECO:0000305" key="2"/>
<comment type="subunit">
    <text evidence="1">Part of the 50S ribosomal subunit.</text>
</comment>
<comment type="similarity">
    <text evidence="1">Belongs to the bacterial ribosomal protein bL31 family. Type B subfamily.</text>
</comment>
<dbReference type="EMBL" id="AM420293">
    <property type="protein sequence ID" value="CAM00097.1"/>
    <property type="molecule type" value="Genomic_DNA"/>
</dbReference>
<dbReference type="RefSeq" id="WP_009950111.1">
    <property type="nucleotide sequence ID" value="NC_009142.1"/>
</dbReference>
<dbReference type="SMR" id="A4F7S3"/>
<dbReference type="STRING" id="405948.SACE_0756"/>
<dbReference type="KEGG" id="sen:SACE_0756"/>
<dbReference type="eggNOG" id="COG0254">
    <property type="taxonomic scope" value="Bacteria"/>
</dbReference>
<dbReference type="HOGENOM" id="CLU_114306_2_1_11"/>
<dbReference type="OrthoDB" id="9803251at2"/>
<dbReference type="Proteomes" id="UP000006728">
    <property type="component" value="Chromosome"/>
</dbReference>
<dbReference type="GO" id="GO:1990904">
    <property type="term" value="C:ribonucleoprotein complex"/>
    <property type="evidence" value="ECO:0007669"/>
    <property type="project" value="UniProtKB-KW"/>
</dbReference>
<dbReference type="GO" id="GO:0005840">
    <property type="term" value="C:ribosome"/>
    <property type="evidence" value="ECO:0007669"/>
    <property type="project" value="UniProtKB-KW"/>
</dbReference>
<dbReference type="GO" id="GO:0003735">
    <property type="term" value="F:structural constituent of ribosome"/>
    <property type="evidence" value="ECO:0007669"/>
    <property type="project" value="InterPro"/>
</dbReference>
<dbReference type="GO" id="GO:0006412">
    <property type="term" value="P:translation"/>
    <property type="evidence" value="ECO:0007669"/>
    <property type="project" value="UniProtKB-UniRule"/>
</dbReference>
<dbReference type="Gene3D" id="4.10.830.30">
    <property type="entry name" value="Ribosomal protein L31"/>
    <property type="match status" value="1"/>
</dbReference>
<dbReference type="HAMAP" id="MF_00502">
    <property type="entry name" value="Ribosomal_bL31_2"/>
    <property type="match status" value="1"/>
</dbReference>
<dbReference type="InterPro" id="IPR034704">
    <property type="entry name" value="Ribosomal_bL28/bL31-like_sf"/>
</dbReference>
<dbReference type="InterPro" id="IPR002150">
    <property type="entry name" value="Ribosomal_bL31"/>
</dbReference>
<dbReference type="InterPro" id="IPR027493">
    <property type="entry name" value="Ribosomal_bL31_B"/>
</dbReference>
<dbReference type="InterPro" id="IPR042105">
    <property type="entry name" value="Ribosomal_bL31_sf"/>
</dbReference>
<dbReference type="NCBIfam" id="TIGR00105">
    <property type="entry name" value="L31"/>
    <property type="match status" value="1"/>
</dbReference>
<dbReference type="NCBIfam" id="NF002462">
    <property type="entry name" value="PRK01678.1"/>
    <property type="match status" value="1"/>
</dbReference>
<dbReference type="PANTHER" id="PTHR33280">
    <property type="entry name" value="50S RIBOSOMAL PROTEIN L31, CHLOROPLASTIC"/>
    <property type="match status" value="1"/>
</dbReference>
<dbReference type="PANTHER" id="PTHR33280:SF1">
    <property type="entry name" value="LARGE RIBOSOMAL SUBUNIT PROTEIN BL31C"/>
    <property type="match status" value="1"/>
</dbReference>
<dbReference type="Pfam" id="PF01197">
    <property type="entry name" value="Ribosomal_L31"/>
    <property type="match status" value="1"/>
</dbReference>
<dbReference type="PRINTS" id="PR01249">
    <property type="entry name" value="RIBOSOMALL31"/>
</dbReference>
<dbReference type="SUPFAM" id="SSF143800">
    <property type="entry name" value="L28p-like"/>
    <property type="match status" value="1"/>
</dbReference>
<dbReference type="PROSITE" id="PS01143">
    <property type="entry name" value="RIBOSOMAL_L31"/>
    <property type="match status" value="1"/>
</dbReference>
<organism>
    <name type="scientific">Saccharopolyspora erythraea (strain ATCC 11635 / DSM 40517 / JCM 4748 / NBRC 13426 / NCIMB 8594 / NRRL 2338)</name>
    <dbReference type="NCBI Taxonomy" id="405948"/>
    <lineage>
        <taxon>Bacteria</taxon>
        <taxon>Bacillati</taxon>
        <taxon>Actinomycetota</taxon>
        <taxon>Actinomycetes</taxon>
        <taxon>Pseudonocardiales</taxon>
        <taxon>Pseudonocardiaceae</taxon>
        <taxon>Saccharopolyspora</taxon>
    </lineage>
</organism>
<accession>A4F7S3</accession>
<feature type="chain" id="PRO_1000014716" description="Large ribosomal subunit protein bL31B">
    <location>
        <begin position="1"/>
        <end position="86"/>
    </location>
</feature>
<proteinExistence type="inferred from homology"/>
<reference key="1">
    <citation type="journal article" date="2007" name="Nat. Biotechnol.">
        <title>Complete genome sequence of the erythromycin-producing bacterium Saccharopolyspora erythraea NRRL23338.</title>
        <authorList>
            <person name="Oliynyk M."/>
            <person name="Samborskyy M."/>
            <person name="Lester J.B."/>
            <person name="Mironenko T."/>
            <person name="Scott N."/>
            <person name="Dickens S."/>
            <person name="Haydock S.F."/>
            <person name="Leadlay P.F."/>
        </authorList>
    </citation>
    <scope>NUCLEOTIDE SEQUENCE [LARGE SCALE GENOMIC DNA]</scope>
    <source>
        <strain>ATCC 11635 / DSM 40517 / JCM 4748 / NBRC 13426 / NCIMB 8594 / NRRL 2338</strain>
    </source>
</reference>